<organism>
    <name type="scientific">Canavalia ensiformis</name>
    <name type="common">Jack bean</name>
    <name type="synonym">Dolichos ensiformis</name>
    <dbReference type="NCBI Taxonomy" id="3823"/>
    <lineage>
        <taxon>Eukaryota</taxon>
        <taxon>Viridiplantae</taxon>
        <taxon>Streptophyta</taxon>
        <taxon>Embryophyta</taxon>
        <taxon>Tracheophyta</taxon>
        <taxon>Spermatophyta</taxon>
        <taxon>Magnoliopsida</taxon>
        <taxon>eudicotyledons</taxon>
        <taxon>Gunneridae</taxon>
        <taxon>Pentapetalae</taxon>
        <taxon>rosids</taxon>
        <taxon>fabids</taxon>
        <taxon>Fabales</taxon>
        <taxon>Fabaceae</taxon>
        <taxon>Papilionoideae</taxon>
        <taxon>50 kb inversion clade</taxon>
        <taxon>NPAAA clade</taxon>
        <taxon>indigoferoid/millettioid clade</taxon>
        <taxon>Phaseoleae</taxon>
        <taxon>Canavalia</taxon>
    </lineage>
</organism>
<protein>
    <recommendedName>
        <fullName evidence="2">Urease</fullName>
        <ecNumber evidence="3">3.5.1.5</ecNumber>
    </recommendedName>
    <alternativeName>
        <fullName evidence="9 10">Jack bean urease</fullName>
        <shortName evidence="9">JBU</shortName>
    </alternativeName>
    <alternativeName>
        <fullName evidence="2">Urea amidohydrolase</fullName>
    </alternativeName>
</protein>
<accession>P07374</accession>
<proteinExistence type="evidence at protein level"/>
<keyword id="KW-0002">3D-structure</keyword>
<keyword id="KW-0903">Direct protein sequencing</keyword>
<keyword id="KW-0378">Hydrolase</keyword>
<keyword id="KW-0479">Metal-binding</keyword>
<keyword id="KW-0528">Neurotoxin</keyword>
<keyword id="KW-0533">Nickel</keyword>
<keyword id="KW-0800">Toxin</keyword>
<evidence type="ECO:0000250" key="1"/>
<evidence type="ECO:0000255" key="2">
    <source>
        <dbReference type="PROSITE-ProRule" id="PRU00700"/>
    </source>
</evidence>
<evidence type="ECO:0000269" key="3">
    <source>
    </source>
</evidence>
<evidence type="ECO:0000269" key="4">
    <source>
    </source>
</evidence>
<evidence type="ECO:0000269" key="5">
    <source>
    </source>
</evidence>
<evidence type="ECO:0000269" key="6">
    <source>
    </source>
</evidence>
<evidence type="ECO:0000269" key="7">
    <source>
    </source>
</evidence>
<evidence type="ECO:0000269" key="8">
    <source ref="4"/>
</evidence>
<evidence type="ECO:0000303" key="9">
    <source>
    </source>
</evidence>
<evidence type="ECO:0000303" key="10">
    <source ref="4"/>
</evidence>
<evidence type="ECO:0000305" key="11"/>
<evidence type="ECO:0000305" key="12">
    <source>
    </source>
</evidence>
<evidence type="ECO:0000305" key="13">
    <source>
    </source>
</evidence>
<evidence type="ECO:0000305" key="14">
    <source>
    </source>
</evidence>
<evidence type="ECO:0007744" key="15">
    <source>
        <dbReference type="PDB" id="3LA4"/>
    </source>
</evidence>
<evidence type="ECO:0007744" key="16">
    <source>
        <dbReference type="PDB" id="4GOA"/>
    </source>
</evidence>
<evidence type="ECO:0007744" key="17">
    <source>
        <dbReference type="PDB" id="4GY7"/>
    </source>
</evidence>
<evidence type="ECO:0007744" key="18">
    <source>
        <dbReference type="PDB" id="4H9M"/>
    </source>
</evidence>
<evidence type="ECO:0007829" key="19">
    <source>
        <dbReference type="PDB" id="4GY7"/>
    </source>
</evidence>
<evidence type="ECO:0007829" key="20">
    <source>
        <dbReference type="PDB" id="7KNS"/>
    </source>
</evidence>
<reference key="1">
    <citation type="journal article" date="1991" name="Gene">
        <title>Cloning and sequencing of a jack bean urease-encoding cDNA.</title>
        <authorList>
            <person name="Riddles P.W."/>
            <person name="Whan V."/>
            <person name="Blakeley R.L."/>
            <person name="Zerner B."/>
        </authorList>
    </citation>
    <scope>NUCLEOTIDE SEQUENCE [MRNA]</scope>
</reference>
<reference key="2">
    <citation type="journal article" date="1992" name="Gene">
        <authorList>
            <person name="Riddles P.W."/>
            <person name="Whan V."/>
            <person name="Blakeley R.L."/>
            <person name="Zerner B."/>
        </authorList>
    </citation>
    <scope>ERRATUM OF PUBMED:1721034</scope>
</reference>
<reference key="3">
    <citation type="journal article" date="1988" name="Eur. J. Biochem.">
        <title>The structure of jack bean urease. The complete amino acid sequence, limited proteolysis and reactive cysteine residues.</title>
        <authorList>
            <person name="Takishima K."/>
            <person name="Suga T."/>
            <person name="Mamiya G."/>
        </authorList>
    </citation>
    <scope>PROTEIN SEQUENCE</scope>
</reference>
<reference key="4">
    <citation type="journal article" date="1985" name="Proc. Jpn. Acad., B, Phys. Biol. Sci.">
        <title>Complete amino acid sequence of jack bean urease.</title>
        <authorList>
            <person name="Mamiya G."/>
            <person name="Takishima K."/>
            <person name="Masakuni M."/>
            <person name="Kayumi T."/>
            <person name="Ogawa K."/>
            <person name="Sekita T."/>
        </authorList>
    </citation>
    <scope>PROTEIN SEQUENCE</scope>
</reference>
<reference key="5">
    <citation type="journal article" date="1987" name="Protein Seq. Data Anal.">
        <title>Location of the essential cysteine residue of jack bean urease.</title>
        <authorList>
            <person name="Takishima K."/>
            <person name="Mamiya G."/>
        </authorList>
    </citation>
    <scope>PROTEIN SEQUENCE OF 591-637</scope>
</reference>
<reference key="6">
    <citation type="journal article" date="2001" name="Biochem. J.">
        <title>Canatoxin, a toxic protein from jack beans (Canavalia ensiformis), is a variant form of urease (EC 3.5.1.5): biological effects of urease independent of its ureolytic activity.</title>
        <authorList>
            <person name="Follmer C."/>
            <person name="Barcellos G.B."/>
            <person name="Zingali R.B."/>
            <person name="Machado O.L."/>
            <person name="Alves E.W."/>
            <person name="Barja-Fidalgo C."/>
            <person name="Guimaraes J.A."/>
            <person name="Carlini C.R."/>
        </authorList>
    </citation>
    <scope>FUNCTION</scope>
    <scope>CATALYTIC ACTIVITY</scope>
    <scope>COFACTOR</scope>
    <scope>ACTIVITY REGULATION</scope>
    <scope>BIOPHYSICOCHEMICAL PROPERTIES</scope>
</reference>
<reference key="7">
    <citation type="journal article" date="2014" name="Arch. Biochem. Biophys.">
        <title>Canavalia ensiformis urease, Jaburetox and derived peptides form ion channels in planar lipid bilayers.</title>
        <authorList>
            <person name="Piovesan A.R."/>
            <person name="Martinelli A.H."/>
            <person name="Ligabue-Braun R."/>
            <person name="Schwartz J.L."/>
            <person name="Carlini C.R."/>
        </authorList>
    </citation>
    <scope>FUNCTION</scope>
</reference>
<reference key="8">
    <citation type="journal article" date="2021" name="Toxicology">
        <title>Neurotoxic and convulsant effects induced by jack bean ureases on the mammalian nervous system.</title>
        <authorList>
            <person name="Almeida C.G.M."/>
            <person name="Costa-Higuchi K."/>
            <person name="Piovesan A.R."/>
            <person name="Moro C.F."/>
            <person name="Venturin G.T."/>
            <person name="Greggio S."/>
            <person name="Costa-Ferro Z.S."/>
            <person name="Salamoni S.D."/>
            <person name="Peigneur S."/>
            <person name="Tytgat J."/>
            <person name="de Lima M.E."/>
            <person name="Silva C.N.D."/>
            <person name="Vinade L."/>
            <person name="Rowan E.G."/>
            <person name="DaCosta J.C."/>
            <person name="Dal Belo C.A."/>
            <person name="Carlini C.R."/>
        </authorList>
    </citation>
    <scope>FUNCTION</scope>
</reference>
<reference key="9">
    <citation type="journal article" date="2016" name="Toxicon">
        <title>Ureases as multifunctional toxic proteins: A review.</title>
        <authorList>
            <person name="Carlini C.R."/>
            <person name="Ligabue-Braun R."/>
        </authorList>
    </citation>
    <scope>REVIEW</scope>
</reference>
<reference key="10">
    <citation type="journal article" date="2010" name="J. Mol. Biol.">
        <title>Crystal structure of the first plant urease from jack bean: 83 years of journey from its first crystal to molecular structure.</title>
        <authorList>
            <person name="Balasubramanian A."/>
            <person name="Ponnuraj K."/>
        </authorList>
    </citation>
    <scope>X-RAY CRYSTALLOGRAPHY (2.05 ANGSTROMS) IN COMPLEX WITH NICKEL IONS</scope>
    <scope>CARBOXYLATION AT LYS-490</scope>
</reference>
<feature type="chain" id="PRO_0000067524" description="Urease" evidence="7 8">
    <location>
        <begin position="1"/>
        <end position="840"/>
    </location>
</feature>
<feature type="domain" description="Urease">
    <location>
        <begin position="402"/>
        <end position="840"/>
    </location>
</feature>
<feature type="active site" description="Proton donor" evidence="1">
    <location>
        <position position="593"/>
    </location>
</feature>
<feature type="binding site" evidence="4 15 16 17 18">
    <location>
        <position position="407"/>
    </location>
    <ligand>
        <name>Ni(2+)</name>
        <dbReference type="ChEBI" id="CHEBI:49786"/>
        <label>1</label>
    </ligand>
</feature>
<feature type="binding site" evidence="4 15 16 17 18">
    <location>
        <position position="409"/>
    </location>
    <ligand>
        <name>Ni(2+)</name>
        <dbReference type="ChEBI" id="CHEBI:49786"/>
        <label>1</label>
    </ligand>
</feature>
<feature type="binding site" description="via carbamate group" evidence="4 15 16 17 18">
    <location>
        <position position="490"/>
    </location>
    <ligand>
        <name>Ni(2+)</name>
        <dbReference type="ChEBI" id="CHEBI:49786"/>
        <label>1</label>
    </ligand>
</feature>
<feature type="binding site" description="via carbamate group" evidence="4 15 16 17 18">
    <location>
        <position position="490"/>
    </location>
    <ligand>
        <name>Ni(2+)</name>
        <dbReference type="ChEBI" id="CHEBI:49786"/>
        <label>2</label>
    </ligand>
</feature>
<feature type="binding site" evidence="1">
    <location>
        <position position="492"/>
    </location>
    <ligand>
        <name>substrate</name>
    </ligand>
</feature>
<feature type="binding site" evidence="4 15 16 17 18">
    <location>
        <position position="519"/>
    </location>
    <ligand>
        <name>Ni(2+)</name>
        <dbReference type="ChEBI" id="CHEBI:49786"/>
        <label>2</label>
    </ligand>
</feature>
<feature type="binding site" evidence="4 15 16 17 18">
    <location>
        <position position="545"/>
    </location>
    <ligand>
        <name>Ni(2+)</name>
        <dbReference type="ChEBI" id="CHEBI:49786"/>
        <label>2</label>
    </ligand>
</feature>
<feature type="binding site" evidence="4 15 16 17 18">
    <location>
        <position position="633"/>
    </location>
    <ligand>
        <name>Ni(2+)</name>
        <dbReference type="ChEBI" id="CHEBI:49786"/>
        <label>1</label>
    </ligand>
</feature>
<feature type="modified residue" description="N6-carboxylysine" evidence="4">
    <location>
        <position position="490"/>
    </location>
</feature>
<feature type="sequence conflict" description="In Ref. 3; AA sequence and 4; AA sequence." evidence="11" ref="3 4">
    <original>K</original>
    <variation>R</variation>
    <location>
        <position position="247"/>
    </location>
</feature>
<feature type="sequence conflict" description="In Ref. 3; AA sequence and 4; AA sequence." evidence="11" ref="3 4">
    <original>S</original>
    <variation>P</variation>
    <location>
        <position position="258"/>
    </location>
</feature>
<feature type="sequence conflict" description="In Ref. 3; AA sequence and 4; AA sequence." evidence="11" ref="3 4">
    <original>P</original>
    <variation>S</variation>
    <location>
        <position position="269"/>
    </location>
</feature>
<feature type="sequence conflict" description="In Ref. 1; AAA83831." evidence="11" ref="1">
    <original>D</original>
    <variation>Y</variation>
    <location>
        <position position="459"/>
    </location>
</feature>
<feature type="sequence conflict" description="In Ref. 1; AAA83831." evidence="11" ref="1">
    <original>K</original>
    <variation>P</variation>
    <location>
        <position position="653"/>
    </location>
</feature>
<feature type="helix" evidence="19">
    <location>
        <begin position="5"/>
        <end position="25"/>
    </location>
</feature>
<feature type="helix" evidence="19">
    <location>
        <begin position="32"/>
        <end position="49"/>
    </location>
</feature>
<feature type="helix" evidence="19">
    <location>
        <begin position="54"/>
        <end position="60"/>
    </location>
</feature>
<feature type="helix" evidence="19">
    <location>
        <begin position="61"/>
        <end position="63"/>
    </location>
</feature>
<feature type="helix" evidence="19">
    <location>
        <begin position="67"/>
        <end position="69"/>
    </location>
</feature>
<feature type="helix" evidence="19">
    <location>
        <begin position="74"/>
        <end position="77"/>
    </location>
</feature>
<feature type="strand" evidence="19">
    <location>
        <begin position="79"/>
        <end position="87"/>
    </location>
</feature>
<feature type="strand" evidence="19">
    <location>
        <begin position="90"/>
        <end position="98"/>
    </location>
</feature>
<feature type="strand" evidence="19">
    <location>
        <begin position="102"/>
        <end position="104"/>
    </location>
</feature>
<feature type="helix" evidence="19">
    <location>
        <begin position="107"/>
        <end position="110"/>
    </location>
</feature>
<feature type="turn" evidence="19">
    <location>
        <begin position="111"/>
        <end position="113"/>
    </location>
</feature>
<feature type="helix" evidence="19">
    <location>
        <begin position="121"/>
        <end position="123"/>
    </location>
</feature>
<feature type="strand" evidence="19">
    <location>
        <begin position="143"/>
        <end position="145"/>
    </location>
</feature>
<feature type="strand" evidence="19">
    <location>
        <begin position="151"/>
        <end position="159"/>
    </location>
</feature>
<feature type="strand" evidence="20">
    <location>
        <begin position="161"/>
        <end position="163"/>
    </location>
</feature>
<feature type="strand" evidence="19">
    <location>
        <begin position="165"/>
        <end position="168"/>
    </location>
</feature>
<feature type="helix" evidence="19">
    <location>
        <begin position="173"/>
        <end position="175"/>
    </location>
</feature>
<feature type="strand" evidence="19">
    <location>
        <begin position="180"/>
        <end position="182"/>
    </location>
</feature>
<feature type="helix" evidence="19">
    <location>
        <begin position="184"/>
        <end position="187"/>
    </location>
</feature>
<feature type="strand" evidence="19">
    <location>
        <begin position="190"/>
        <end position="192"/>
    </location>
</feature>
<feature type="strand" evidence="19">
    <location>
        <begin position="199"/>
        <end position="202"/>
    </location>
</feature>
<feature type="strand" evidence="19">
    <location>
        <begin position="207"/>
        <end position="214"/>
    </location>
</feature>
<feature type="strand" evidence="19">
    <location>
        <begin position="226"/>
        <end position="228"/>
    </location>
</feature>
<feature type="strand" evidence="19">
    <location>
        <begin position="230"/>
        <end position="233"/>
    </location>
</feature>
<feature type="helix" evidence="19">
    <location>
        <begin position="234"/>
        <end position="247"/>
    </location>
</feature>
<feature type="strand" evidence="19">
    <location>
        <begin position="259"/>
        <end position="261"/>
    </location>
</feature>
<feature type="strand" evidence="19">
    <location>
        <begin position="273"/>
        <end position="275"/>
    </location>
</feature>
<feature type="helix" evidence="19">
    <location>
        <begin position="276"/>
        <end position="283"/>
    </location>
</feature>
<feature type="strand" evidence="19">
    <location>
        <begin position="290"/>
        <end position="292"/>
    </location>
</feature>
<feature type="strand" evidence="19">
    <location>
        <begin position="299"/>
        <end position="301"/>
    </location>
</feature>
<feature type="strand" evidence="19">
    <location>
        <begin position="319"/>
        <end position="323"/>
    </location>
</feature>
<feature type="turn" evidence="19">
    <location>
        <begin position="324"/>
        <end position="326"/>
    </location>
</feature>
<feature type="strand" evidence="19">
    <location>
        <begin position="329"/>
        <end position="331"/>
    </location>
</feature>
<feature type="helix" evidence="19">
    <location>
        <begin position="333"/>
        <end position="335"/>
    </location>
</feature>
<feature type="strand" evidence="19">
    <location>
        <begin position="338"/>
        <end position="348"/>
    </location>
</feature>
<feature type="strand" evidence="19">
    <location>
        <begin position="351"/>
        <end position="360"/>
    </location>
</feature>
<feature type="strand" evidence="19">
    <location>
        <begin position="363"/>
        <end position="368"/>
    </location>
</feature>
<feature type="turn" evidence="19">
    <location>
        <begin position="373"/>
        <end position="375"/>
    </location>
</feature>
<feature type="strand" evidence="19">
    <location>
        <begin position="390"/>
        <end position="393"/>
    </location>
</feature>
<feature type="strand" evidence="19">
    <location>
        <begin position="398"/>
        <end position="401"/>
    </location>
</feature>
<feature type="strand" evidence="19">
    <location>
        <begin position="403"/>
        <end position="409"/>
    </location>
</feature>
<feature type="helix" evidence="19">
    <location>
        <begin position="414"/>
        <end position="421"/>
    </location>
</feature>
<feature type="strand" evidence="19">
    <location>
        <begin position="424"/>
        <end position="430"/>
    </location>
</feature>
<feature type="strand" evidence="19">
    <location>
        <begin position="432"/>
        <end position="434"/>
    </location>
</feature>
<feature type="helix" evidence="19">
    <location>
        <begin position="436"/>
        <end position="440"/>
    </location>
</feature>
<feature type="helix" evidence="19">
    <location>
        <begin position="447"/>
        <end position="456"/>
    </location>
</feature>
<feature type="turn" evidence="19">
    <location>
        <begin position="457"/>
        <end position="459"/>
    </location>
</feature>
<feature type="strand" evidence="19">
    <location>
        <begin position="460"/>
        <end position="469"/>
    </location>
</feature>
<feature type="strand" evidence="19">
    <location>
        <begin position="473"/>
        <end position="475"/>
    </location>
</feature>
<feature type="helix" evidence="19">
    <location>
        <begin position="476"/>
        <end position="484"/>
    </location>
</feature>
<feature type="strand" evidence="19">
    <location>
        <begin position="487"/>
        <end position="492"/>
    </location>
</feature>
<feature type="turn" evidence="19">
    <location>
        <begin position="493"/>
        <end position="495"/>
    </location>
</feature>
<feature type="helix" evidence="19">
    <location>
        <begin position="499"/>
        <end position="512"/>
    </location>
</feature>
<feature type="strand" evidence="19">
    <location>
        <begin position="515"/>
        <end position="519"/>
    </location>
</feature>
<feature type="helix" evidence="19">
    <location>
        <begin position="529"/>
        <end position="536"/>
    </location>
</feature>
<feature type="strand" evidence="19">
    <location>
        <begin position="541"/>
        <end position="543"/>
    </location>
</feature>
<feature type="turn" evidence="19">
    <location>
        <begin position="544"/>
        <end position="547"/>
    </location>
</feature>
<feature type="strand" evidence="20">
    <location>
        <begin position="548"/>
        <end position="551"/>
    </location>
</feature>
<feature type="turn" evidence="19">
    <location>
        <begin position="554"/>
        <end position="556"/>
    </location>
</feature>
<feature type="helix" evidence="19">
    <location>
        <begin position="557"/>
        <end position="562"/>
    </location>
</feature>
<feature type="strand" evidence="19">
    <location>
        <begin position="566"/>
        <end position="572"/>
    </location>
</feature>
<feature type="helix" evidence="19">
    <location>
        <begin position="581"/>
        <end position="592"/>
    </location>
</feature>
<feature type="helix" evidence="19">
    <location>
        <begin position="600"/>
        <end position="609"/>
    </location>
</feature>
<feature type="helix" evidence="19">
    <location>
        <begin position="612"/>
        <end position="623"/>
    </location>
</feature>
<feature type="strand" evidence="19">
    <location>
        <begin position="629"/>
        <end position="631"/>
    </location>
</feature>
<feature type="turn" evidence="19">
    <location>
        <begin position="635"/>
        <end position="637"/>
    </location>
</feature>
<feature type="helix" evidence="19">
    <location>
        <begin position="640"/>
        <end position="642"/>
    </location>
</feature>
<feature type="helix" evidence="19">
    <location>
        <begin position="643"/>
        <end position="658"/>
    </location>
</feature>
<feature type="helix" evidence="19">
    <location>
        <begin position="670"/>
        <end position="678"/>
    </location>
</feature>
<feature type="turn" evidence="19">
    <location>
        <begin position="679"/>
        <end position="681"/>
    </location>
</feature>
<feature type="helix" evidence="19">
    <location>
        <begin position="682"/>
        <end position="688"/>
    </location>
</feature>
<feature type="turn" evidence="19">
    <location>
        <begin position="691"/>
        <end position="693"/>
    </location>
</feature>
<feature type="strand" evidence="19">
    <location>
        <begin position="694"/>
        <end position="697"/>
    </location>
</feature>
<feature type="strand" evidence="19">
    <location>
        <begin position="705"/>
        <end position="708"/>
    </location>
</feature>
<feature type="helix" evidence="19">
    <location>
        <begin position="710"/>
        <end position="712"/>
    </location>
</feature>
<feature type="turn" evidence="19">
    <location>
        <begin position="713"/>
        <end position="715"/>
    </location>
</feature>
<feature type="strand" evidence="19">
    <location>
        <begin position="718"/>
        <end position="722"/>
    </location>
</feature>
<feature type="strand" evidence="19">
    <location>
        <begin position="725"/>
        <end position="731"/>
    </location>
</feature>
<feature type="strand" evidence="19">
    <location>
        <begin position="736"/>
        <end position="739"/>
    </location>
</feature>
<feature type="strand" evidence="20">
    <location>
        <begin position="741"/>
        <end position="743"/>
    </location>
</feature>
<feature type="strand" evidence="19">
    <location>
        <begin position="745"/>
        <end position="748"/>
    </location>
</feature>
<feature type="helix" evidence="19">
    <location>
        <begin position="750"/>
        <end position="752"/>
    </location>
</feature>
<feature type="helix" evidence="19">
    <location>
        <begin position="756"/>
        <end position="759"/>
    </location>
</feature>
<feature type="strand" evidence="19">
    <location>
        <begin position="762"/>
        <end position="765"/>
    </location>
</feature>
<feature type="helix" evidence="19">
    <location>
        <begin position="767"/>
        <end position="771"/>
    </location>
</feature>
<feature type="helix" evidence="19">
    <location>
        <begin position="774"/>
        <end position="778"/>
    </location>
</feature>
<feature type="strand" evidence="19">
    <location>
        <begin position="782"/>
        <end position="786"/>
    </location>
</feature>
<feature type="helix" evidence="19">
    <location>
        <begin position="795"/>
        <end position="797"/>
    </location>
</feature>
<feature type="strand" evidence="19">
    <location>
        <begin position="807"/>
        <end position="809"/>
    </location>
</feature>
<feature type="turn" evidence="19">
    <location>
        <begin position="811"/>
        <end position="813"/>
    </location>
</feature>
<feature type="strand" evidence="19">
    <location>
        <begin position="816"/>
        <end position="818"/>
    </location>
</feature>
<feature type="strand" evidence="19">
    <location>
        <begin position="832"/>
        <end position="834"/>
    </location>
</feature>
<feature type="turn" evidence="19">
    <location>
        <begin position="835"/>
        <end position="837"/>
    </location>
</feature>
<dbReference type="EC" id="3.5.1.5" evidence="3"/>
<dbReference type="EMBL" id="M65260">
    <property type="protein sequence ID" value="AAA83831.1"/>
    <property type="molecule type" value="mRNA"/>
</dbReference>
<dbReference type="PIR" id="JC1396">
    <property type="entry name" value="URJB"/>
</dbReference>
<dbReference type="PDB" id="3LA4">
    <property type="method" value="X-ray"/>
    <property type="resolution" value="2.05 A"/>
    <property type="chains" value="A=1-840"/>
</dbReference>
<dbReference type="PDB" id="4GOA">
    <property type="method" value="X-ray"/>
    <property type="resolution" value="2.20 A"/>
    <property type="chains" value="A=1-840"/>
</dbReference>
<dbReference type="PDB" id="4GY7">
    <property type="method" value="X-ray"/>
    <property type="resolution" value="1.49 A"/>
    <property type="chains" value="A=1-840"/>
</dbReference>
<dbReference type="PDB" id="4H9M">
    <property type="method" value="X-ray"/>
    <property type="resolution" value="1.52 A"/>
    <property type="chains" value="A=1-840"/>
</dbReference>
<dbReference type="PDB" id="7KNS">
    <property type="method" value="EM"/>
    <property type="resolution" value="2.77 A"/>
    <property type="chains" value="A/B/C/D/E/F=1-840"/>
</dbReference>
<dbReference type="PDBsum" id="3LA4"/>
<dbReference type="PDBsum" id="4GOA"/>
<dbReference type="PDBsum" id="4GY7"/>
<dbReference type="PDBsum" id="4H9M"/>
<dbReference type="PDBsum" id="7KNS"/>
<dbReference type="SMR" id="P07374"/>
<dbReference type="BindingDB" id="P07374"/>
<dbReference type="ChEMBL" id="CHEMBL4161"/>
<dbReference type="DrugCentral" id="P07374"/>
<dbReference type="MEROPS" id="M38.982"/>
<dbReference type="BRENDA" id="3.5.1.5">
    <property type="organism ID" value="1091"/>
</dbReference>
<dbReference type="SABIO-RK" id="P07374"/>
<dbReference type="UniPathway" id="UPA00258">
    <property type="reaction ID" value="UER00370"/>
</dbReference>
<dbReference type="EvolutionaryTrace" id="P07374"/>
<dbReference type="GO" id="GO:0035550">
    <property type="term" value="C:urease complex"/>
    <property type="evidence" value="ECO:0007669"/>
    <property type="project" value="InterPro"/>
</dbReference>
<dbReference type="GO" id="GO:0016151">
    <property type="term" value="F:nickel cation binding"/>
    <property type="evidence" value="ECO:0000314"/>
    <property type="project" value="UniProtKB"/>
</dbReference>
<dbReference type="GO" id="GO:0090729">
    <property type="term" value="F:toxin activity"/>
    <property type="evidence" value="ECO:0007669"/>
    <property type="project" value="UniProtKB-KW"/>
</dbReference>
<dbReference type="GO" id="GO:0009039">
    <property type="term" value="F:urease activity"/>
    <property type="evidence" value="ECO:0007669"/>
    <property type="project" value="UniProtKB-EC"/>
</dbReference>
<dbReference type="GO" id="GO:0043419">
    <property type="term" value="P:urea catabolic process"/>
    <property type="evidence" value="ECO:0000314"/>
    <property type="project" value="UniProtKB"/>
</dbReference>
<dbReference type="CDD" id="cd00375">
    <property type="entry name" value="Urease_alpha"/>
    <property type="match status" value="1"/>
</dbReference>
<dbReference type="CDD" id="cd00407">
    <property type="entry name" value="Urease_beta"/>
    <property type="match status" value="1"/>
</dbReference>
<dbReference type="CDD" id="cd00390">
    <property type="entry name" value="Urease_gamma"/>
    <property type="match status" value="1"/>
</dbReference>
<dbReference type="FunFam" id="2.10.150.10:FF:000002">
    <property type="entry name" value="Urease"/>
    <property type="match status" value="1"/>
</dbReference>
<dbReference type="FunFam" id="3.30.280.10:FF:000001">
    <property type="entry name" value="Urease subunit alpha"/>
    <property type="match status" value="1"/>
</dbReference>
<dbReference type="Gene3D" id="3.20.20.140">
    <property type="entry name" value="Metal-dependent hydrolases"/>
    <property type="match status" value="1"/>
</dbReference>
<dbReference type="Gene3D" id="2.10.150.10">
    <property type="entry name" value="Urease, beta subunit"/>
    <property type="match status" value="1"/>
</dbReference>
<dbReference type="Gene3D" id="3.30.280.10">
    <property type="entry name" value="Urease, gamma-like subunit"/>
    <property type="match status" value="1"/>
</dbReference>
<dbReference type="Gene3D" id="2.30.40.10">
    <property type="entry name" value="Urease, subunit C, domain 1"/>
    <property type="match status" value="1"/>
</dbReference>
<dbReference type="HAMAP" id="MF_01953">
    <property type="entry name" value="Urease_alpha"/>
    <property type="match status" value="1"/>
</dbReference>
<dbReference type="InterPro" id="IPR006680">
    <property type="entry name" value="Amidohydro-rel"/>
</dbReference>
<dbReference type="InterPro" id="IPR011059">
    <property type="entry name" value="Metal-dep_hydrolase_composite"/>
</dbReference>
<dbReference type="InterPro" id="IPR032466">
    <property type="entry name" value="Metal_Hydrolase"/>
</dbReference>
<dbReference type="InterPro" id="IPR008221">
    <property type="entry name" value="Urease"/>
</dbReference>
<dbReference type="InterPro" id="IPR011612">
    <property type="entry name" value="Urease_alpha_N_dom"/>
</dbReference>
<dbReference type="InterPro" id="IPR050112">
    <property type="entry name" value="Urease_alpha_subunit"/>
</dbReference>
<dbReference type="InterPro" id="IPR017950">
    <property type="entry name" value="Urease_AS"/>
</dbReference>
<dbReference type="InterPro" id="IPR005848">
    <property type="entry name" value="Urease_asu"/>
</dbReference>
<dbReference type="InterPro" id="IPR017951">
    <property type="entry name" value="Urease_asu_c"/>
</dbReference>
<dbReference type="InterPro" id="IPR002019">
    <property type="entry name" value="Urease_beta-like"/>
</dbReference>
<dbReference type="InterPro" id="IPR036461">
    <property type="entry name" value="Urease_betasu_sf"/>
</dbReference>
<dbReference type="InterPro" id="IPR002026">
    <property type="entry name" value="Urease_gamma/gamma-beta_su"/>
</dbReference>
<dbReference type="InterPro" id="IPR036463">
    <property type="entry name" value="Urease_gamma_sf"/>
</dbReference>
<dbReference type="InterPro" id="IPR040881">
    <property type="entry name" value="Urease_linker"/>
</dbReference>
<dbReference type="InterPro" id="IPR029754">
    <property type="entry name" value="Urease_Ni-bd"/>
</dbReference>
<dbReference type="NCBIfam" id="NF009671">
    <property type="entry name" value="PRK13192.1"/>
    <property type="match status" value="1"/>
</dbReference>
<dbReference type="NCBIfam" id="NF009682">
    <property type="entry name" value="PRK13203.1"/>
    <property type="match status" value="1"/>
</dbReference>
<dbReference type="NCBIfam" id="NF009686">
    <property type="entry name" value="PRK13207.1"/>
    <property type="match status" value="1"/>
</dbReference>
<dbReference type="NCBIfam" id="NF009712">
    <property type="entry name" value="PRK13241.1"/>
    <property type="match status" value="1"/>
</dbReference>
<dbReference type="NCBIfam" id="TIGR01792">
    <property type="entry name" value="urease_alph"/>
    <property type="match status" value="1"/>
</dbReference>
<dbReference type="NCBIfam" id="TIGR00192">
    <property type="entry name" value="urease_beta"/>
    <property type="match status" value="1"/>
</dbReference>
<dbReference type="NCBIfam" id="TIGR00193">
    <property type="entry name" value="urease_gam"/>
    <property type="match status" value="1"/>
</dbReference>
<dbReference type="PANTHER" id="PTHR43440">
    <property type="entry name" value="UREASE"/>
    <property type="match status" value="1"/>
</dbReference>
<dbReference type="PANTHER" id="PTHR43440:SF1">
    <property type="entry name" value="UREASE"/>
    <property type="match status" value="1"/>
</dbReference>
<dbReference type="Pfam" id="PF01979">
    <property type="entry name" value="Amidohydro_1"/>
    <property type="match status" value="1"/>
</dbReference>
<dbReference type="Pfam" id="PF00449">
    <property type="entry name" value="Urease_alpha"/>
    <property type="match status" value="1"/>
</dbReference>
<dbReference type="Pfam" id="PF00699">
    <property type="entry name" value="Urease_beta"/>
    <property type="match status" value="1"/>
</dbReference>
<dbReference type="Pfam" id="PF00547">
    <property type="entry name" value="Urease_gamma"/>
    <property type="match status" value="1"/>
</dbReference>
<dbReference type="Pfam" id="PF18473">
    <property type="entry name" value="Urease_linker"/>
    <property type="match status" value="1"/>
</dbReference>
<dbReference type="PIRSF" id="PIRSF001222">
    <property type="entry name" value="Urease"/>
    <property type="match status" value="1"/>
</dbReference>
<dbReference type="PRINTS" id="PR01752">
    <property type="entry name" value="UREASE"/>
</dbReference>
<dbReference type="SUPFAM" id="SSF51338">
    <property type="entry name" value="Composite domain of metallo-dependent hydrolases"/>
    <property type="match status" value="2"/>
</dbReference>
<dbReference type="SUPFAM" id="SSF51556">
    <property type="entry name" value="Metallo-dependent hydrolases"/>
    <property type="match status" value="1"/>
</dbReference>
<dbReference type="SUPFAM" id="SSF51278">
    <property type="entry name" value="Urease, beta-subunit"/>
    <property type="match status" value="1"/>
</dbReference>
<dbReference type="SUPFAM" id="SSF54111">
    <property type="entry name" value="Urease, gamma-subunit"/>
    <property type="match status" value="1"/>
</dbReference>
<dbReference type="PROSITE" id="PS01120">
    <property type="entry name" value="UREASE_1"/>
    <property type="match status" value="1"/>
</dbReference>
<dbReference type="PROSITE" id="PS00145">
    <property type="entry name" value="UREASE_2"/>
    <property type="match status" value="1"/>
</dbReference>
<dbReference type="PROSITE" id="PS51368">
    <property type="entry name" value="UREASE_3"/>
    <property type="match status" value="1"/>
</dbReference>
<name>UREA_CANEN</name>
<sequence length="840" mass="90748">MKLSPREVEKLGLHNAGYLAQKRLARGVRLNYTEAVALIASQIMEYARDGEKTVAQLMCLGQHLLGRRQVLPAVPHLLNAVQVEATFPDGTKLVTVHDPISRENGELQEALFGSLLPVPSLDKFAETKEDNRIPGEILCEDECLTLNIGRKAVILKVTSKGDRPIQVGSHYHFIEVNPYLTFDRRKAYGMRLNIAAGTAVRFEPGDCKSVTLVSIEGNKVIRGGNAIADGPVNETNLEAAMHAVRSKGFGHEEEKDASEGFTKEDPNCPFNTFIHRKEYANKYGPTTGDKIRLGDTNLLAEIEKDYALYGDECVFGGGKVIRDGMGQSCGHPPAISLDTVITNAVIIDYTGIIKADIGIKDGLIASIGKAGNPDIMNGVFSNMIIGANTEVIAGEGLIVTAGAIDCHVHYICPQLVYEAISSGITTLVGGGTGPAAGTRATTCTPSPTQMRLMLQSTDDLPLNFGFTGKGSSSKPDELHEIIKAGAMGLKLHEDWGSTPAAIDNCLTIAEHHDIQINIHTDTLNEAGFVEHSIAAFKGRTIHTYHSEGAGGGHAPDIIKVCGIKNVLPSSTNPTRPLTSNTIDEHLDMLMVCHHLDREIPEDLAFAHSRIRKKTIAAEDVLNDIGAISIISSDSQAMGRVGEVISRTWQTADKMKAQTGPLKCDSSDNDNFRIRRYIAKYTINPAIANGFSQYVGSVEVGKLADLVMWKPSFFGTKPEMVIKGGMVAWADIGDPNASIPTPEPVKMRPMYGTLGKAGGALSIAFVSKAALDQRVNVLYGLNKRVEAVSNVRKLTKLDMKLNDALPEITVDPESYTVKADGKLLCVSEATTVPLSRNYFLF</sequence>
<comment type="function">
    <text evidence="3 5 6 13">Urea hydrolase involved in nitrogen recycling from ureide, purine, and arginine catabolism (PubMed:26690979). Is known to be highly toxic and lethal when given by intravenous route, producing convulsions and other signs of central nervous system intoxication associated with the high levels of ammonia formed in the blood of mice and rabbits (PubMed:26690979). Is neurotoxic in mammals, when directly injected into hippocampus (PubMed:33631299). It may induce seizures by acting at a neuronal network level, thereby disturbing electroencephalographic rhythms and causing metabolic alterations in key areas related to epileptogenesis and to neurogenic pulmonary edema (PubMed:33631299). It increases calcium influx and neuronal firing rate in the hippocampus (PubMed:33631299). Is able to insert itself into lipid bilayers, altering physicochemical properties of artificial membranes, and forming cation-selective ion channels (PubMed:24583269). In vitro, has the ability to induce platelet aggregation, platelet granules secretion and release of ATP (PubMed:11696010). In contrast to canatoxin, another urease from C.ensiformis, is not lethal to mice when intraperitoneally injected (PubMed:11696010).</text>
</comment>
<comment type="catalytic activity">
    <reaction evidence="3">
        <text>urea + 2 H2O + H(+) = hydrogencarbonate + 2 NH4(+)</text>
        <dbReference type="Rhea" id="RHEA:20557"/>
        <dbReference type="ChEBI" id="CHEBI:15377"/>
        <dbReference type="ChEBI" id="CHEBI:15378"/>
        <dbReference type="ChEBI" id="CHEBI:16199"/>
        <dbReference type="ChEBI" id="CHEBI:17544"/>
        <dbReference type="ChEBI" id="CHEBI:28938"/>
        <dbReference type="EC" id="3.5.1.5"/>
    </reaction>
    <physiologicalReaction direction="left-to-right" evidence="3">
        <dbReference type="Rhea" id="RHEA:20558"/>
    </physiologicalReaction>
</comment>
<comment type="cofactor">
    <cofactor evidence="3 4">
        <name>Ni cation</name>
        <dbReference type="ChEBI" id="CHEBI:25516"/>
    </cofactor>
    <text evidence="4">Binds 2 nickel ions per subunit.</text>
</comment>
<comment type="activity regulation">
    <text evidence="3">P-hydroxymercuribenzoate irreversibly abolishes ureolytic activity, but does not inhibit the ability to activate platelets (PubMed:11696010). Also inhibited by acetohydroxamic acid (AHA), a chelator of Ni2+ and Zn2+ ions (PubMed:11696010).</text>
</comment>
<comment type="biophysicochemical properties">
    <kinetics>
        <KM evidence="3">1.5 mM for urea (at 37 degrees Celsius and pH 6.5)</KM>
        <KM evidence="3">2.9 mM for urea (at 37 degrees Celsius and pH 7.5)</KM>
        <KM evidence="3">7.1 mM for urea (at 37 degrees Celsius and pH 8.5)</KM>
        <Vmax evidence="3">6000.0 umol/min/mg enzyme (at 37 degrees Celsius and pH 6.5)</Vmax>
        <Vmax evidence="3">13700.0 umol/min/mg enzyme (at 37 degrees Celsius and pH 7.5)</Vmax>
        <Vmax evidence="3">26700.0 umol/min/mg enzyme (at 37 degrees Celsius and pH 8.5)</Vmax>
    </kinetics>
</comment>
<comment type="pathway">
    <text evidence="11">Nitrogen metabolism; urea degradation; CO(2) and NH(3) from urea (urease route): step 1/1.</text>
</comment>
<comment type="subunit">
    <text evidence="12 14">Homohexamer (Probable). Other oligomeric forms may exist depending on pH and presence of salts (Probable).</text>
</comment>
<comment type="PTM">
    <text evidence="4">Carboxylation allows a single lysine to coordinate two nickel ions.</text>
</comment>
<comment type="miscellaneous">
    <text evidence="14">Was isolated in 1926 by James B. Sumner. It was the first enzyme ever obtained in a crystalline form, demonstrating that enzymes could be proteins.</text>
</comment>
<comment type="similarity">
    <text evidence="11">In the C-terminal section; belongs to the metallo-dependent hydrolases superfamily. Urease alpha subunit family.</text>
</comment>